<sequence>MSVSPVSIVSTPVAVSESPAGSPVQPAVPVTVRWRGSEAYQTSFDAMRAFTDTRTADTGDEIWVVEHPPVYTLGQAGDPAHLLVADSGVPLVKVDRGGQITYHGPGQIVVYLLLDLRRRKLMVRTLVTKIEEAVIETLAAYNLASVRKAGAPGIYVASGVHEGAKIAALGLKIRNGCSYHGLSLNVKMDLRPFLAINPCGYAGLETVDMASLEVAADWNDVAHTLVGRLIANLDGESAAADKPQALEHSND</sequence>
<gene>
    <name evidence="1" type="primary">lipB</name>
    <name type="ordered locus">Bamb_2938</name>
</gene>
<protein>
    <recommendedName>
        <fullName evidence="1">Octanoyltransferase</fullName>
        <ecNumber evidence="1">2.3.1.181</ecNumber>
    </recommendedName>
    <alternativeName>
        <fullName evidence="1">Lipoate-protein ligase B</fullName>
    </alternativeName>
    <alternativeName>
        <fullName evidence="1">Lipoyl/octanoyl transferase</fullName>
    </alternativeName>
    <alternativeName>
        <fullName evidence="1">Octanoyl-[acyl-carrier-protein]-protein N-octanoyltransferase</fullName>
    </alternativeName>
</protein>
<keyword id="KW-0012">Acyltransferase</keyword>
<keyword id="KW-0963">Cytoplasm</keyword>
<keyword id="KW-0808">Transferase</keyword>
<feature type="chain" id="PRO_1000089444" description="Octanoyltransferase">
    <location>
        <begin position="1"/>
        <end position="251"/>
    </location>
</feature>
<feature type="domain" description="BPL/LPL catalytic" evidence="2">
    <location>
        <begin position="56"/>
        <end position="237"/>
    </location>
</feature>
<feature type="active site" description="Acyl-thioester intermediate" evidence="1">
    <location>
        <position position="199"/>
    </location>
</feature>
<feature type="binding site" evidence="1">
    <location>
        <begin position="96"/>
        <end position="103"/>
    </location>
    <ligand>
        <name>substrate</name>
    </ligand>
</feature>
<feature type="binding site" evidence="1">
    <location>
        <begin position="168"/>
        <end position="170"/>
    </location>
    <ligand>
        <name>substrate</name>
    </ligand>
</feature>
<feature type="binding site" evidence="1">
    <location>
        <begin position="181"/>
        <end position="183"/>
    </location>
    <ligand>
        <name>substrate</name>
    </ligand>
</feature>
<feature type="site" description="Lowers pKa of active site Cys" evidence="1">
    <location>
        <position position="165"/>
    </location>
</feature>
<evidence type="ECO:0000255" key="1">
    <source>
        <dbReference type="HAMAP-Rule" id="MF_00013"/>
    </source>
</evidence>
<evidence type="ECO:0000255" key="2">
    <source>
        <dbReference type="PROSITE-ProRule" id="PRU01067"/>
    </source>
</evidence>
<accession>Q0BBH9</accession>
<proteinExistence type="inferred from homology"/>
<dbReference type="EC" id="2.3.1.181" evidence="1"/>
<dbReference type="EMBL" id="CP000440">
    <property type="protein sequence ID" value="ABI88494.1"/>
    <property type="molecule type" value="Genomic_DNA"/>
</dbReference>
<dbReference type="RefSeq" id="WP_011658029.1">
    <property type="nucleotide sequence ID" value="NC_008390.1"/>
</dbReference>
<dbReference type="SMR" id="Q0BBH9"/>
<dbReference type="GeneID" id="93084860"/>
<dbReference type="KEGG" id="bam:Bamb_2938"/>
<dbReference type="PATRIC" id="fig|339670.21.peg.1942"/>
<dbReference type="eggNOG" id="COG0321">
    <property type="taxonomic scope" value="Bacteria"/>
</dbReference>
<dbReference type="UniPathway" id="UPA00538">
    <property type="reaction ID" value="UER00592"/>
</dbReference>
<dbReference type="Proteomes" id="UP000000662">
    <property type="component" value="Chromosome 1"/>
</dbReference>
<dbReference type="GO" id="GO:0005737">
    <property type="term" value="C:cytoplasm"/>
    <property type="evidence" value="ECO:0007669"/>
    <property type="project" value="UniProtKB-SubCell"/>
</dbReference>
<dbReference type="GO" id="GO:0033819">
    <property type="term" value="F:lipoyl(octanoyl) transferase activity"/>
    <property type="evidence" value="ECO:0007669"/>
    <property type="project" value="UniProtKB-EC"/>
</dbReference>
<dbReference type="GO" id="GO:0036211">
    <property type="term" value="P:protein modification process"/>
    <property type="evidence" value="ECO:0007669"/>
    <property type="project" value="InterPro"/>
</dbReference>
<dbReference type="CDD" id="cd16444">
    <property type="entry name" value="LipB"/>
    <property type="match status" value="1"/>
</dbReference>
<dbReference type="FunFam" id="3.30.930.10:FF:000020">
    <property type="entry name" value="Octanoyltransferase"/>
    <property type="match status" value="1"/>
</dbReference>
<dbReference type="Gene3D" id="3.30.930.10">
    <property type="entry name" value="Bira Bifunctional Protein, Domain 2"/>
    <property type="match status" value="1"/>
</dbReference>
<dbReference type="HAMAP" id="MF_00013">
    <property type="entry name" value="LipB"/>
    <property type="match status" value="1"/>
</dbReference>
<dbReference type="InterPro" id="IPR045864">
    <property type="entry name" value="aa-tRNA-synth_II/BPL/LPL"/>
</dbReference>
<dbReference type="InterPro" id="IPR004143">
    <property type="entry name" value="BPL_LPL_catalytic"/>
</dbReference>
<dbReference type="InterPro" id="IPR000544">
    <property type="entry name" value="Octanoyltransferase"/>
</dbReference>
<dbReference type="InterPro" id="IPR020605">
    <property type="entry name" value="Octanoyltransferase_CS"/>
</dbReference>
<dbReference type="NCBIfam" id="TIGR00214">
    <property type="entry name" value="lipB"/>
    <property type="match status" value="1"/>
</dbReference>
<dbReference type="NCBIfam" id="NF010922">
    <property type="entry name" value="PRK14342.1"/>
    <property type="match status" value="1"/>
</dbReference>
<dbReference type="NCBIfam" id="NF010923">
    <property type="entry name" value="PRK14343.1"/>
    <property type="match status" value="1"/>
</dbReference>
<dbReference type="PANTHER" id="PTHR10993:SF7">
    <property type="entry name" value="LIPOYLTRANSFERASE 2, MITOCHONDRIAL-RELATED"/>
    <property type="match status" value="1"/>
</dbReference>
<dbReference type="PANTHER" id="PTHR10993">
    <property type="entry name" value="OCTANOYLTRANSFERASE"/>
    <property type="match status" value="1"/>
</dbReference>
<dbReference type="Pfam" id="PF21948">
    <property type="entry name" value="LplA-B_cat"/>
    <property type="match status" value="1"/>
</dbReference>
<dbReference type="PIRSF" id="PIRSF016262">
    <property type="entry name" value="LPLase"/>
    <property type="match status" value="1"/>
</dbReference>
<dbReference type="SUPFAM" id="SSF55681">
    <property type="entry name" value="Class II aaRS and biotin synthetases"/>
    <property type="match status" value="1"/>
</dbReference>
<dbReference type="PROSITE" id="PS51733">
    <property type="entry name" value="BPL_LPL_CATALYTIC"/>
    <property type="match status" value="1"/>
</dbReference>
<dbReference type="PROSITE" id="PS01313">
    <property type="entry name" value="LIPB"/>
    <property type="match status" value="1"/>
</dbReference>
<comment type="function">
    <text evidence="1">Catalyzes the transfer of endogenously produced octanoic acid from octanoyl-acyl-carrier-protein onto the lipoyl domains of lipoate-dependent enzymes. Lipoyl-ACP can also act as a substrate although octanoyl-ACP is likely to be the physiological substrate.</text>
</comment>
<comment type="catalytic activity">
    <reaction evidence="1">
        <text>octanoyl-[ACP] + L-lysyl-[protein] = N(6)-octanoyl-L-lysyl-[protein] + holo-[ACP] + H(+)</text>
        <dbReference type="Rhea" id="RHEA:17665"/>
        <dbReference type="Rhea" id="RHEA-COMP:9636"/>
        <dbReference type="Rhea" id="RHEA-COMP:9685"/>
        <dbReference type="Rhea" id="RHEA-COMP:9752"/>
        <dbReference type="Rhea" id="RHEA-COMP:9928"/>
        <dbReference type="ChEBI" id="CHEBI:15378"/>
        <dbReference type="ChEBI" id="CHEBI:29969"/>
        <dbReference type="ChEBI" id="CHEBI:64479"/>
        <dbReference type="ChEBI" id="CHEBI:78463"/>
        <dbReference type="ChEBI" id="CHEBI:78809"/>
        <dbReference type="EC" id="2.3.1.181"/>
    </reaction>
</comment>
<comment type="pathway">
    <text evidence="1">Protein modification; protein lipoylation via endogenous pathway; protein N(6)-(lipoyl)lysine from octanoyl-[acyl-carrier-protein]: step 1/2.</text>
</comment>
<comment type="subcellular location">
    <subcellularLocation>
        <location evidence="1">Cytoplasm</location>
    </subcellularLocation>
</comment>
<comment type="miscellaneous">
    <text evidence="1">In the reaction, the free carboxyl group of octanoic acid is attached via an amide linkage to the epsilon-amino group of a specific lysine residue of lipoyl domains of lipoate-dependent enzymes.</text>
</comment>
<comment type="similarity">
    <text evidence="1">Belongs to the LipB family.</text>
</comment>
<organism>
    <name type="scientific">Burkholderia ambifaria (strain ATCC BAA-244 / DSM 16087 / CCUG 44356 / LMG 19182 / AMMD)</name>
    <name type="common">Burkholderia cepacia (strain AMMD)</name>
    <dbReference type="NCBI Taxonomy" id="339670"/>
    <lineage>
        <taxon>Bacteria</taxon>
        <taxon>Pseudomonadati</taxon>
        <taxon>Pseudomonadota</taxon>
        <taxon>Betaproteobacteria</taxon>
        <taxon>Burkholderiales</taxon>
        <taxon>Burkholderiaceae</taxon>
        <taxon>Burkholderia</taxon>
        <taxon>Burkholderia cepacia complex</taxon>
    </lineage>
</organism>
<reference key="1">
    <citation type="submission" date="2006-08" db="EMBL/GenBank/DDBJ databases">
        <title>Complete sequence of chromosome 1 of Burkholderia cepacia AMMD.</title>
        <authorList>
            <person name="Copeland A."/>
            <person name="Lucas S."/>
            <person name="Lapidus A."/>
            <person name="Barry K."/>
            <person name="Detter J.C."/>
            <person name="Glavina del Rio T."/>
            <person name="Hammon N."/>
            <person name="Israni S."/>
            <person name="Pitluck S."/>
            <person name="Bruce D."/>
            <person name="Chain P."/>
            <person name="Malfatti S."/>
            <person name="Shin M."/>
            <person name="Vergez L."/>
            <person name="Schmutz J."/>
            <person name="Larimer F."/>
            <person name="Land M."/>
            <person name="Hauser L."/>
            <person name="Kyrpides N."/>
            <person name="Kim E."/>
            <person name="Parke J."/>
            <person name="Coenye T."/>
            <person name="Konstantinidis K."/>
            <person name="Ramette A."/>
            <person name="Tiedje J."/>
            <person name="Richardson P."/>
        </authorList>
    </citation>
    <scope>NUCLEOTIDE SEQUENCE [LARGE SCALE GENOMIC DNA]</scope>
    <source>
        <strain>ATCC BAA-244 / DSM 16087 / CCUG 44356 / LMG 19182 / AMMD</strain>
    </source>
</reference>
<name>LIPB_BURCM</name>